<keyword id="KW-0963">Cytoplasm</keyword>
<keyword id="KW-0460">Magnesium</keyword>
<keyword id="KW-0479">Metal-binding</keyword>
<keyword id="KW-0566">Pantothenate biosynthesis</keyword>
<keyword id="KW-1185">Reference proteome</keyword>
<keyword id="KW-0808">Transferase</keyword>
<protein>
    <recommendedName>
        <fullName evidence="1">3-methyl-2-oxobutanoate hydroxymethyltransferase</fullName>
        <ecNumber evidence="1">2.1.2.11</ecNumber>
    </recommendedName>
    <alternativeName>
        <fullName evidence="1">Ketopantoate hydroxymethyltransferase</fullName>
        <shortName evidence="1">KPHMT</shortName>
    </alternativeName>
</protein>
<evidence type="ECO:0000255" key="1">
    <source>
        <dbReference type="HAMAP-Rule" id="MF_00156"/>
    </source>
</evidence>
<feature type="chain" id="PRO_0000297218" description="3-methyl-2-oxobutanoate hydroxymethyltransferase">
    <location>
        <begin position="1"/>
        <end position="271"/>
    </location>
</feature>
<feature type="active site" description="Proton acceptor" evidence="1">
    <location>
        <position position="188"/>
    </location>
</feature>
<feature type="binding site" evidence="1">
    <location>
        <begin position="51"/>
        <end position="52"/>
    </location>
    <ligand>
        <name>3-methyl-2-oxobutanoate</name>
        <dbReference type="ChEBI" id="CHEBI:11851"/>
    </ligand>
</feature>
<feature type="binding site" evidence="1">
    <location>
        <position position="51"/>
    </location>
    <ligand>
        <name>Mg(2+)</name>
        <dbReference type="ChEBI" id="CHEBI:18420"/>
    </ligand>
</feature>
<feature type="binding site" evidence="1">
    <location>
        <position position="90"/>
    </location>
    <ligand>
        <name>3-methyl-2-oxobutanoate</name>
        <dbReference type="ChEBI" id="CHEBI:11851"/>
    </ligand>
</feature>
<feature type="binding site" evidence="1">
    <location>
        <position position="90"/>
    </location>
    <ligand>
        <name>Mg(2+)</name>
        <dbReference type="ChEBI" id="CHEBI:18420"/>
    </ligand>
</feature>
<feature type="binding site" evidence="1">
    <location>
        <position position="119"/>
    </location>
    <ligand>
        <name>3-methyl-2-oxobutanoate</name>
        <dbReference type="ChEBI" id="CHEBI:11851"/>
    </ligand>
</feature>
<feature type="binding site" evidence="1">
    <location>
        <position position="121"/>
    </location>
    <ligand>
        <name>Mg(2+)</name>
        <dbReference type="ChEBI" id="CHEBI:18420"/>
    </ligand>
</feature>
<organism>
    <name type="scientific">Azoarcus sp. (strain BH72)</name>
    <dbReference type="NCBI Taxonomy" id="418699"/>
    <lineage>
        <taxon>Bacteria</taxon>
        <taxon>Pseudomonadati</taxon>
        <taxon>Pseudomonadota</taxon>
        <taxon>Betaproteobacteria</taxon>
        <taxon>Rhodocyclales</taxon>
        <taxon>Zoogloeaceae</taxon>
        <taxon>Azoarcus</taxon>
    </lineage>
</organism>
<gene>
    <name evidence="1" type="primary">panB</name>
    <name type="ordered locus">azo3144</name>
</gene>
<proteinExistence type="inferred from homology"/>
<dbReference type="EC" id="2.1.2.11" evidence="1"/>
<dbReference type="EMBL" id="AM406670">
    <property type="protein sequence ID" value="CAL95761.1"/>
    <property type="molecule type" value="Genomic_DNA"/>
</dbReference>
<dbReference type="RefSeq" id="WP_011766869.1">
    <property type="nucleotide sequence ID" value="NC_008702.1"/>
</dbReference>
<dbReference type="SMR" id="A1KAA5"/>
<dbReference type="STRING" id="62928.azo3144"/>
<dbReference type="KEGG" id="azo:azo3144"/>
<dbReference type="eggNOG" id="COG0413">
    <property type="taxonomic scope" value="Bacteria"/>
</dbReference>
<dbReference type="HOGENOM" id="CLU_036645_1_0_4"/>
<dbReference type="UniPathway" id="UPA00028">
    <property type="reaction ID" value="UER00003"/>
</dbReference>
<dbReference type="Proteomes" id="UP000002588">
    <property type="component" value="Chromosome"/>
</dbReference>
<dbReference type="GO" id="GO:0005737">
    <property type="term" value="C:cytoplasm"/>
    <property type="evidence" value="ECO:0007669"/>
    <property type="project" value="UniProtKB-SubCell"/>
</dbReference>
<dbReference type="GO" id="GO:0003864">
    <property type="term" value="F:3-methyl-2-oxobutanoate hydroxymethyltransferase activity"/>
    <property type="evidence" value="ECO:0007669"/>
    <property type="project" value="UniProtKB-UniRule"/>
</dbReference>
<dbReference type="GO" id="GO:0000287">
    <property type="term" value="F:magnesium ion binding"/>
    <property type="evidence" value="ECO:0007669"/>
    <property type="project" value="TreeGrafter"/>
</dbReference>
<dbReference type="GO" id="GO:0015940">
    <property type="term" value="P:pantothenate biosynthetic process"/>
    <property type="evidence" value="ECO:0007669"/>
    <property type="project" value="UniProtKB-UniRule"/>
</dbReference>
<dbReference type="CDD" id="cd06557">
    <property type="entry name" value="KPHMT-like"/>
    <property type="match status" value="1"/>
</dbReference>
<dbReference type="FunFam" id="3.20.20.60:FF:000003">
    <property type="entry name" value="3-methyl-2-oxobutanoate hydroxymethyltransferase"/>
    <property type="match status" value="1"/>
</dbReference>
<dbReference type="Gene3D" id="3.20.20.60">
    <property type="entry name" value="Phosphoenolpyruvate-binding domains"/>
    <property type="match status" value="1"/>
</dbReference>
<dbReference type="HAMAP" id="MF_00156">
    <property type="entry name" value="PanB"/>
    <property type="match status" value="1"/>
</dbReference>
<dbReference type="InterPro" id="IPR003700">
    <property type="entry name" value="Pantoate_hydroxy_MeTrfase"/>
</dbReference>
<dbReference type="InterPro" id="IPR015813">
    <property type="entry name" value="Pyrv/PenolPyrv_kinase-like_dom"/>
</dbReference>
<dbReference type="InterPro" id="IPR040442">
    <property type="entry name" value="Pyrv_kinase-like_dom_sf"/>
</dbReference>
<dbReference type="NCBIfam" id="TIGR00222">
    <property type="entry name" value="panB"/>
    <property type="match status" value="1"/>
</dbReference>
<dbReference type="NCBIfam" id="NF001452">
    <property type="entry name" value="PRK00311.1"/>
    <property type="match status" value="1"/>
</dbReference>
<dbReference type="PANTHER" id="PTHR20881">
    <property type="entry name" value="3-METHYL-2-OXOBUTANOATE HYDROXYMETHYLTRANSFERASE"/>
    <property type="match status" value="1"/>
</dbReference>
<dbReference type="PANTHER" id="PTHR20881:SF0">
    <property type="entry name" value="3-METHYL-2-OXOBUTANOATE HYDROXYMETHYLTRANSFERASE"/>
    <property type="match status" value="1"/>
</dbReference>
<dbReference type="Pfam" id="PF02548">
    <property type="entry name" value="Pantoate_transf"/>
    <property type="match status" value="1"/>
</dbReference>
<dbReference type="PIRSF" id="PIRSF000388">
    <property type="entry name" value="Pantoate_hydroxy_MeTrfase"/>
    <property type="match status" value="1"/>
</dbReference>
<dbReference type="SUPFAM" id="SSF51621">
    <property type="entry name" value="Phosphoenolpyruvate/pyruvate domain"/>
    <property type="match status" value="1"/>
</dbReference>
<accession>A1KAA5</accession>
<reference key="1">
    <citation type="journal article" date="2006" name="Nat. Biotechnol.">
        <title>Complete genome of the mutualistic, N2-fixing grass endophyte Azoarcus sp. strain BH72.</title>
        <authorList>
            <person name="Krause A."/>
            <person name="Ramakumar A."/>
            <person name="Bartels D."/>
            <person name="Battistoni F."/>
            <person name="Bekel T."/>
            <person name="Boch J."/>
            <person name="Boehm M."/>
            <person name="Friedrich F."/>
            <person name="Hurek T."/>
            <person name="Krause L."/>
            <person name="Linke B."/>
            <person name="McHardy A.C."/>
            <person name="Sarkar A."/>
            <person name="Schneiker S."/>
            <person name="Syed A.A."/>
            <person name="Thauer R."/>
            <person name="Vorhoelter F.-J."/>
            <person name="Weidner S."/>
            <person name="Puehler A."/>
            <person name="Reinhold-Hurek B."/>
            <person name="Kaiser O."/>
            <person name="Goesmann A."/>
        </authorList>
    </citation>
    <scope>NUCLEOTIDE SEQUENCE [LARGE SCALE GENOMIC DNA]</scope>
    <source>
        <strain>BH72</strain>
    </source>
</reference>
<name>PANB_AZOSB</name>
<comment type="function">
    <text evidence="1">Catalyzes the reversible reaction in which hydroxymethyl group from 5,10-methylenetetrahydrofolate is transferred onto alpha-ketoisovalerate to form ketopantoate.</text>
</comment>
<comment type="catalytic activity">
    <reaction evidence="1">
        <text>3-methyl-2-oxobutanoate + (6R)-5,10-methylene-5,6,7,8-tetrahydrofolate + H2O = 2-dehydropantoate + (6S)-5,6,7,8-tetrahydrofolate</text>
        <dbReference type="Rhea" id="RHEA:11824"/>
        <dbReference type="ChEBI" id="CHEBI:11561"/>
        <dbReference type="ChEBI" id="CHEBI:11851"/>
        <dbReference type="ChEBI" id="CHEBI:15377"/>
        <dbReference type="ChEBI" id="CHEBI:15636"/>
        <dbReference type="ChEBI" id="CHEBI:57453"/>
        <dbReference type="EC" id="2.1.2.11"/>
    </reaction>
</comment>
<comment type="cofactor">
    <cofactor evidence="1">
        <name>Mg(2+)</name>
        <dbReference type="ChEBI" id="CHEBI:18420"/>
    </cofactor>
    <text evidence="1">Binds 1 Mg(2+) ion per subunit.</text>
</comment>
<comment type="pathway">
    <text evidence="1">Cofactor biosynthesis; (R)-pantothenate biosynthesis; (R)-pantoate from 3-methyl-2-oxobutanoate: step 1/2.</text>
</comment>
<comment type="subunit">
    <text evidence="1">Homodecamer; pentamer of dimers.</text>
</comment>
<comment type="subcellular location">
    <subcellularLocation>
        <location evidence="1">Cytoplasm</location>
    </subcellularLocation>
</comment>
<comment type="similarity">
    <text evidence="1">Belongs to the PanB family.</text>
</comment>
<sequence length="271" mass="28665">MSYLQDDKPVTLFELGKMRAEGRKIAMLTCYDASFAALLERNGVDVLLVGDSLGNVLQGQKSTLPVTLEQMAYHTECVVRGSSRPFVVTDMPFGSYQESPEQAMRNAARLMAAGAEMVKLEGGAFMAETVRFLVERGVPVCAHIGLTPQSVHQLGGYRVQGRSEEGAARLKADALALEQAGAALVVLEMVPAAVASDITRSLSTMATIGIGAGADCSGQVLVLHDMIGVYPGKKARFVKNFMEGAASIDAAVAAYVAAVKDGSFPAAEHCY</sequence>